<comment type="catalytic activity">
    <reaction evidence="1">
        <text>tRNA(Leu) + L-leucine + ATP = L-leucyl-tRNA(Leu) + AMP + diphosphate</text>
        <dbReference type="Rhea" id="RHEA:11688"/>
        <dbReference type="Rhea" id="RHEA-COMP:9613"/>
        <dbReference type="Rhea" id="RHEA-COMP:9622"/>
        <dbReference type="ChEBI" id="CHEBI:30616"/>
        <dbReference type="ChEBI" id="CHEBI:33019"/>
        <dbReference type="ChEBI" id="CHEBI:57427"/>
        <dbReference type="ChEBI" id="CHEBI:78442"/>
        <dbReference type="ChEBI" id="CHEBI:78494"/>
        <dbReference type="ChEBI" id="CHEBI:456215"/>
        <dbReference type="EC" id="6.1.1.4"/>
    </reaction>
</comment>
<comment type="subcellular location">
    <subcellularLocation>
        <location evidence="1">Cytoplasm</location>
    </subcellularLocation>
</comment>
<comment type="similarity">
    <text evidence="1">Belongs to the class-I aminoacyl-tRNA synthetase family.</text>
</comment>
<organism>
    <name type="scientific">Burkholderia mallei (strain ATCC 23344)</name>
    <dbReference type="NCBI Taxonomy" id="243160"/>
    <lineage>
        <taxon>Bacteria</taxon>
        <taxon>Pseudomonadati</taxon>
        <taxon>Pseudomonadota</taxon>
        <taxon>Betaproteobacteria</taxon>
        <taxon>Burkholderiales</taxon>
        <taxon>Burkholderiaceae</taxon>
        <taxon>Burkholderia</taxon>
        <taxon>pseudomallei group</taxon>
    </lineage>
</organism>
<accession>Q62H20</accession>
<dbReference type="EC" id="6.1.1.4" evidence="1"/>
<dbReference type="EMBL" id="CP000010">
    <property type="protein sequence ID" value="AAU49705.1"/>
    <property type="molecule type" value="Genomic_DNA"/>
</dbReference>
<dbReference type="RefSeq" id="WP_004194387.1">
    <property type="nucleotide sequence ID" value="NC_006348.1"/>
</dbReference>
<dbReference type="RefSeq" id="YP_104000.1">
    <property type="nucleotide sequence ID" value="NC_006348.1"/>
</dbReference>
<dbReference type="SMR" id="Q62H20"/>
<dbReference type="GeneID" id="92980145"/>
<dbReference type="KEGG" id="bma:BMA2453"/>
<dbReference type="PATRIC" id="fig|243160.12.peg.2529"/>
<dbReference type="eggNOG" id="COG0495">
    <property type="taxonomic scope" value="Bacteria"/>
</dbReference>
<dbReference type="HOGENOM" id="CLU_004427_0_0_4"/>
<dbReference type="Proteomes" id="UP000006693">
    <property type="component" value="Chromosome 1"/>
</dbReference>
<dbReference type="GO" id="GO:0005829">
    <property type="term" value="C:cytosol"/>
    <property type="evidence" value="ECO:0007669"/>
    <property type="project" value="TreeGrafter"/>
</dbReference>
<dbReference type="GO" id="GO:0002161">
    <property type="term" value="F:aminoacyl-tRNA deacylase activity"/>
    <property type="evidence" value="ECO:0007669"/>
    <property type="project" value="InterPro"/>
</dbReference>
<dbReference type="GO" id="GO:0005524">
    <property type="term" value="F:ATP binding"/>
    <property type="evidence" value="ECO:0007669"/>
    <property type="project" value="UniProtKB-UniRule"/>
</dbReference>
<dbReference type="GO" id="GO:0004823">
    <property type="term" value="F:leucine-tRNA ligase activity"/>
    <property type="evidence" value="ECO:0007669"/>
    <property type="project" value="UniProtKB-UniRule"/>
</dbReference>
<dbReference type="GO" id="GO:0006429">
    <property type="term" value="P:leucyl-tRNA aminoacylation"/>
    <property type="evidence" value="ECO:0007669"/>
    <property type="project" value="UniProtKB-UniRule"/>
</dbReference>
<dbReference type="CDD" id="cd07958">
    <property type="entry name" value="Anticodon_Ia_Leu_BEm"/>
    <property type="match status" value="1"/>
</dbReference>
<dbReference type="CDD" id="cd00812">
    <property type="entry name" value="LeuRS_core"/>
    <property type="match status" value="1"/>
</dbReference>
<dbReference type="FunFam" id="1.10.730.10:FF:000002">
    <property type="entry name" value="Leucine--tRNA ligase"/>
    <property type="match status" value="1"/>
</dbReference>
<dbReference type="FunFam" id="2.20.28.290:FF:000001">
    <property type="entry name" value="Leucine--tRNA ligase"/>
    <property type="match status" value="1"/>
</dbReference>
<dbReference type="FunFam" id="3.40.50.620:FF:000003">
    <property type="entry name" value="Leucine--tRNA ligase"/>
    <property type="match status" value="1"/>
</dbReference>
<dbReference type="FunFam" id="3.40.50.620:FF:000056">
    <property type="entry name" value="Leucine--tRNA ligase"/>
    <property type="match status" value="1"/>
</dbReference>
<dbReference type="FunFam" id="3.90.740.10:FF:000012">
    <property type="entry name" value="Leucine--tRNA ligase"/>
    <property type="match status" value="1"/>
</dbReference>
<dbReference type="Gene3D" id="2.20.28.290">
    <property type="match status" value="1"/>
</dbReference>
<dbReference type="Gene3D" id="3.10.20.590">
    <property type="match status" value="1"/>
</dbReference>
<dbReference type="Gene3D" id="3.40.50.620">
    <property type="entry name" value="HUPs"/>
    <property type="match status" value="2"/>
</dbReference>
<dbReference type="Gene3D" id="1.10.730.10">
    <property type="entry name" value="Isoleucyl-tRNA Synthetase, Domain 1"/>
    <property type="match status" value="1"/>
</dbReference>
<dbReference type="Gene3D" id="3.90.740.10">
    <property type="entry name" value="Valyl/Leucyl/Isoleucyl-tRNA synthetase, editing domain"/>
    <property type="match status" value="1"/>
</dbReference>
<dbReference type="HAMAP" id="MF_00049_B">
    <property type="entry name" value="Leu_tRNA_synth_B"/>
    <property type="match status" value="1"/>
</dbReference>
<dbReference type="InterPro" id="IPR001412">
    <property type="entry name" value="aa-tRNA-synth_I_CS"/>
</dbReference>
<dbReference type="InterPro" id="IPR002300">
    <property type="entry name" value="aa-tRNA-synth_Ia"/>
</dbReference>
<dbReference type="InterPro" id="IPR002302">
    <property type="entry name" value="Leu-tRNA-ligase"/>
</dbReference>
<dbReference type="InterPro" id="IPR025709">
    <property type="entry name" value="Leu_tRNA-synth_edit"/>
</dbReference>
<dbReference type="InterPro" id="IPR013155">
    <property type="entry name" value="M/V/L/I-tRNA-synth_anticd-bd"/>
</dbReference>
<dbReference type="InterPro" id="IPR015413">
    <property type="entry name" value="Methionyl/Leucyl_tRNA_Synth"/>
</dbReference>
<dbReference type="InterPro" id="IPR014729">
    <property type="entry name" value="Rossmann-like_a/b/a_fold"/>
</dbReference>
<dbReference type="InterPro" id="IPR009080">
    <property type="entry name" value="tRNAsynth_Ia_anticodon-bd"/>
</dbReference>
<dbReference type="InterPro" id="IPR009008">
    <property type="entry name" value="Val/Leu/Ile-tRNA-synth_edit"/>
</dbReference>
<dbReference type="NCBIfam" id="TIGR00396">
    <property type="entry name" value="leuS_bact"/>
    <property type="match status" value="1"/>
</dbReference>
<dbReference type="PANTHER" id="PTHR43740:SF2">
    <property type="entry name" value="LEUCINE--TRNA LIGASE, MITOCHONDRIAL"/>
    <property type="match status" value="1"/>
</dbReference>
<dbReference type="PANTHER" id="PTHR43740">
    <property type="entry name" value="LEUCYL-TRNA SYNTHETASE"/>
    <property type="match status" value="1"/>
</dbReference>
<dbReference type="Pfam" id="PF08264">
    <property type="entry name" value="Anticodon_1"/>
    <property type="match status" value="1"/>
</dbReference>
<dbReference type="Pfam" id="PF00133">
    <property type="entry name" value="tRNA-synt_1"/>
    <property type="match status" value="2"/>
</dbReference>
<dbReference type="Pfam" id="PF13603">
    <property type="entry name" value="tRNA-synt_1_2"/>
    <property type="match status" value="1"/>
</dbReference>
<dbReference type="Pfam" id="PF09334">
    <property type="entry name" value="tRNA-synt_1g"/>
    <property type="match status" value="1"/>
</dbReference>
<dbReference type="PRINTS" id="PR00985">
    <property type="entry name" value="TRNASYNTHLEU"/>
</dbReference>
<dbReference type="SUPFAM" id="SSF47323">
    <property type="entry name" value="Anticodon-binding domain of a subclass of class I aminoacyl-tRNA synthetases"/>
    <property type="match status" value="1"/>
</dbReference>
<dbReference type="SUPFAM" id="SSF52374">
    <property type="entry name" value="Nucleotidylyl transferase"/>
    <property type="match status" value="1"/>
</dbReference>
<dbReference type="SUPFAM" id="SSF50677">
    <property type="entry name" value="ValRS/IleRS/LeuRS editing domain"/>
    <property type="match status" value="1"/>
</dbReference>
<dbReference type="PROSITE" id="PS00178">
    <property type="entry name" value="AA_TRNA_LIGASE_I"/>
    <property type="match status" value="1"/>
</dbReference>
<keyword id="KW-0030">Aminoacyl-tRNA synthetase</keyword>
<keyword id="KW-0067">ATP-binding</keyword>
<keyword id="KW-0963">Cytoplasm</keyword>
<keyword id="KW-0436">Ligase</keyword>
<keyword id="KW-0547">Nucleotide-binding</keyword>
<keyword id="KW-0648">Protein biosynthesis</keyword>
<keyword id="KW-1185">Reference proteome</keyword>
<reference key="1">
    <citation type="journal article" date="2004" name="Proc. Natl. Acad. Sci. U.S.A.">
        <title>Structural flexibility in the Burkholderia mallei genome.</title>
        <authorList>
            <person name="Nierman W.C."/>
            <person name="DeShazer D."/>
            <person name="Kim H.S."/>
            <person name="Tettelin H."/>
            <person name="Nelson K.E."/>
            <person name="Feldblyum T.V."/>
            <person name="Ulrich R.L."/>
            <person name="Ronning C.M."/>
            <person name="Brinkac L.M."/>
            <person name="Daugherty S.C."/>
            <person name="Davidsen T.D."/>
            <person name="DeBoy R.T."/>
            <person name="Dimitrov G."/>
            <person name="Dodson R.J."/>
            <person name="Durkin A.S."/>
            <person name="Gwinn M.L."/>
            <person name="Haft D.H."/>
            <person name="Khouri H.M."/>
            <person name="Kolonay J.F."/>
            <person name="Madupu R."/>
            <person name="Mohammoud Y."/>
            <person name="Nelson W.C."/>
            <person name="Radune D."/>
            <person name="Romero C.M."/>
            <person name="Sarria S."/>
            <person name="Selengut J."/>
            <person name="Shamblin C."/>
            <person name="Sullivan S.A."/>
            <person name="White O."/>
            <person name="Yu Y."/>
            <person name="Zafar N."/>
            <person name="Zhou L."/>
            <person name="Fraser C.M."/>
        </authorList>
    </citation>
    <scope>NUCLEOTIDE SEQUENCE [LARGE SCALE GENOMIC DNA]</scope>
    <source>
        <strain>ATCC 23344</strain>
    </source>
</reference>
<protein>
    <recommendedName>
        <fullName evidence="1">Leucine--tRNA ligase</fullName>
        <ecNumber evidence="1">6.1.1.4</ecNumber>
    </recommendedName>
    <alternativeName>
        <fullName evidence="1">Leucyl-tRNA synthetase</fullName>
        <shortName evidence="1">LeuRS</shortName>
    </alternativeName>
</protein>
<feature type="chain" id="PRO_0000151990" description="Leucine--tRNA ligase">
    <location>
        <begin position="1"/>
        <end position="864"/>
    </location>
</feature>
<feature type="short sequence motif" description="'HIGH' region">
    <location>
        <begin position="42"/>
        <end position="52"/>
    </location>
</feature>
<feature type="short sequence motif" description="'KMSKS' region">
    <location>
        <begin position="624"/>
        <end position="628"/>
    </location>
</feature>
<feature type="binding site" evidence="1">
    <location>
        <position position="627"/>
    </location>
    <ligand>
        <name>ATP</name>
        <dbReference type="ChEBI" id="CHEBI:30616"/>
    </ligand>
</feature>
<sequence length="864" mass="96193">MHERYVPADVEAAAQSDWRAADAYRSKEDANRKKFYCVSMLPYPSGKLHMGHVRNYTINDVMYRYLRMNGYNTLMPMGWDAFGMPAENAAMANGVPPAQWTYENIAYMKKQMQAMGLAIDWSREVTTCKPDYYKWNQWLFLKMLEKGVAYKKTGTVNWDPVDQTVLANEQVIDGRGWRSGAFVEKREIPMYYMRITQYADELLNDLDGLGWPERVKVMQHNWIGKSFGVNFGFPYELDGEKKLLRVFTTRADTIMGVTFCAIAAEHPLAARLARDKPALQAFIDECKRGGVAEADIATMEKKGVATGFSVSHPLTGEPVEVWIGNYVLMSYGEGAVMGVPAHDERDFAFAKKYGLPIRQVIAVEGETYSTDAWQEWYGDKTRAVCVNSGKYDGLAYDAAVDAIAAELKAGGLGDKQITYRLRDWGISRQRYWGTPIPIIHCPSCGDVPVPEQDLPVVLPEDLVPDGTGNPLAKSDAFLNCTCPKCGAVAKRETDTMDTFVDSAWYFSRYAAPDAQTMVDARTDYWMPMDQYIGGIEHAILHLLYSRFWAKVMRDLGLVAFGEPAKNLLTQGMVLNETFYREDAAGKKTWYNPADVTVSFDDKGRPVGAVLKSDGQPVELGGIEKMSKSKNNGVDPQMLIDHYGADTARLFTMFAAPPEQQLEWSGAGVDGASRFLRRVWAFGFANREALAVRAPFDAAQLAEAGKTLRREIHGVLKQADFDYQRLQYNTVVSAAMKMLNAIEGAKGATPAVLRETYGVLLRVLYPVVPHVTFELWKVLGYADEFGPLLDAPWPKVDEAALEQAEIELVLQVNGKVRGALKVAKDASREAIEAAAVADGMFAKFAEGRPAKKIIVVPGRLVNVVV</sequence>
<name>SYL_BURMA</name>
<evidence type="ECO:0000255" key="1">
    <source>
        <dbReference type="HAMAP-Rule" id="MF_00049"/>
    </source>
</evidence>
<gene>
    <name evidence="1" type="primary">leuS</name>
    <name type="ordered locus">BMA2453</name>
</gene>
<proteinExistence type="inferred from homology"/>